<evidence type="ECO:0000255" key="1">
    <source>
        <dbReference type="HAMAP-Rule" id="MF_01398"/>
    </source>
</evidence>
<dbReference type="EMBL" id="AE016828">
    <property type="protein sequence ID" value="AAO91431.1"/>
    <property type="molecule type" value="Genomic_DNA"/>
</dbReference>
<dbReference type="RefSeq" id="NP_820917.1">
    <property type="nucleotide sequence ID" value="NC_002971.4"/>
</dbReference>
<dbReference type="RefSeq" id="WP_005770032.1">
    <property type="nucleotide sequence ID" value="NZ_CDBG01000001.1"/>
</dbReference>
<dbReference type="SMR" id="Q83AF9"/>
<dbReference type="STRING" id="227377.CBU_1941"/>
<dbReference type="EnsemblBacteria" id="AAO91431">
    <property type="protein sequence ID" value="AAO91431"/>
    <property type="gene ID" value="CBU_1941"/>
</dbReference>
<dbReference type="GeneID" id="1209854"/>
<dbReference type="KEGG" id="cbu:CBU_1941"/>
<dbReference type="PATRIC" id="fig|227377.7.peg.1927"/>
<dbReference type="eggNOG" id="COG0711">
    <property type="taxonomic scope" value="Bacteria"/>
</dbReference>
<dbReference type="HOGENOM" id="CLU_079215_4_5_6"/>
<dbReference type="OrthoDB" id="9788020at2"/>
<dbReference type="Proteomes" id="UP000002671">
    <property type="component" value="Chromosome"/>
</dbReference>
<dbReference type="GO" id="GO:0005886">
    <property type="term" value="C:plasma membrane"/>
    <property type="evidence" value="ECO:0007669"/>
    <property type="project" value="UniProtKB-SubCell"/>
</dbReference>
<dbReference type="GO" id="GO:0045259">
    <property type="term" value="C:proton-transporting ATP synthase complex"/>
    <property type="evidence" value="ECO:0007669"/>
    <property type="project" value="UniProtKB-KW"/>
</dbReference>
<dbReference type="GO" id="GO:0046933">
    <property type="term" value="F:proton-transporting ATP synthase activity, rotational mechanism"/>
    <property type="evidence" value="ECO:0007669"/>
    <property type="project" value="UniProtKB-UniRule"/>
</dbReference>
<dbReference type="CDD" id="cd06503">
    <property type="entry name" value="ATP-synt_Fo_b"/>
    <property type="match status" value="1"/>
</dbReference>
<dbReference type="FunFam" id="1.20.5.620:FF:000001">
    <property type="entry name" value="ATP synthase subunit b"/>
    <property type="match status" value="1"/>
</dbReference>
<dbReference type="Gene3D" id="1.20.5.620">
    <property type="entry name" value="F1F0 ATP synthase subunit B, membrane domain"/>
    <property type="match status" value="1"/>
</dbReference>
<dbReference type="HAMAP" id="MF_01398">
    <property type="entry name" value="ATP_synth_b_bprime"/>
    <property type="match status" value="1"/>
</dbReference>
<dbReference type="InterPro" id="IPR028987">
    <property type="entry name" value="ATP_synth_B-like_membr_sf"/>
</dbReference>
<dbReference type="InterPro" id="IPR002146">
    <property type="entry name" value="ATP_synth_b/b'su_bac/chlpt"/>
</dbReference>
<dbReference type="InterPro" id="IPR005864">
    <property type="entry name" value="ATP_synth_F0_bsu_bac"/>
</dbReference>
<dbReference type="InterPro" id="IPR050059">
    <property type="entry name" value="ATP_synthase_B_chain"/>
</dbReference>
<dbReference type="NCBIfam" id="TIGR01144">
    <property type="entry name" value="ATP_synt_b"/>
    <property type="match status" value="1"/>
</dbReference>
<dbReference type="NCBIfam" id="NF004411">
    <property type="entry name" value="PRK05759.1-2"/>
    <property type="match status" value="1"/>
</dbReference>
<dbReference type="PANTHER" id="PTHR33445:SF1">
    <property type="entry name" value="ATP SYNTHASE SUBUNIT B"/>
    <property type="match status" value="1"/>
</dbReference>
<dbReference type="PANTHER" id="PTHR33445">
    <property type="entry name" value="ATP SYNTHASE SUBUNIT B', CHLOROPLASTIC"/>
    <property type="match status" value="1"/>
</dbReference>
<dbReference type="Pfam" id="PF00430">
    <property type="entry name" value="ATP-synt_B"/>
    <property type="match status" value="1"/>
</dbReference>
<dbReference type="SUPFAM" id="SSF81573">
    <property type="entry name" value="F1F0 ATP synthase subunit B, membrane domain"/>
    <property type="match status" value="1"/>
</dbReference>
<gene>
    <name evidence="1" type="primary">atpF</name>
    <name type="ordered locus">CBU_1941</name>
</gene>
<comment type="function">
    <text evidence="1">F(1)F(0) ATP synthase produces ATP from ADP in the presence of a proton or sodium gradient. F-type ATPases consist of two structural domains, F(1) containing the extramembraneous catalytic core and F(0) containing the membrane proton channel, linked together by a central stalk and a peripheral stalk. During catalysis, ATP synthesis in the catalytic domain of F(1) is coupled via a rotary mechanism of the central stalk subunits to proton translocation.</text>
</comment>
<comment type="function">
    <text evidence="1">Component of the F(0) channel, it forms part of the peripheral stalk, linking F(1) to F(0).</text>
</comment>
<comment type="subunit">
    <text evidence="1">F-type ATPases have 2 components, F(1) - the catalytic core - and F(0) - the membrane proton channel. F(1) has five subunits: alpha(3), beta(3), gamma(1), delta(1), epsilon(1). F(0) has three main subunits: a(1), b(2) and c(10-14). The alpha and beta chains form an alternating ring which encloses part of the gamma chain. F(1) is attached to F(0) by a central stalk formed by the gamma and epsilon chains, while a peripheral stalk is formed by the delta and b chains.</text>
</comment>
<comment type="subcellular location">
    <subcellularLocation>
        <location evidence="1">Cell inner membrane</location>
        <topology evidence="1">Single-pass membrane protein</topology>
    </subcellularLocation>
</comment>
<comment type="similarity">
    <text evidence="1">Belongs to the ATPase B chain family.</text>
</comment>
<protein>
    <recommendedName>
        <fullName evidence="1">ATP synthase subunit b</fullName>
    </recommendedName>
    <alternativeName>
        <fullName evidence="1">ATP synthase F(0) sector subunit b</fullName>
    </alternativeName>
    <alternativeName>
        <fullName evidence="1">ATPase subunit I</fullName>
    </alternativeName>
    <alternativeName>
        <fullName evidence="1">F-type ATPase subunit b</fullName>
        <shortName evidence="1">F-ATPase subunit b</shortName>
    </alternativeName>
</protein>
<accession>Q83AF9</accession>
<name>ATPF_COXBU</name>
<organism>
    <name type="scientific">Coxiella burnetii (strain RSA 493 / Nine Mile phase I)</name>
    <dbReference type="NCBI Taxonomy" id="227377"/>
    <lineage>
        <taxon>Bacteria</taxon>
        <taxon>Pseudomonadati</taxon>
        <taxon>Pseudomonadota</taxon>
        <taxon>Gammaproteobacteria</taxon>
        <taxon>Legionellales</taxon>
        <taxon>Coxiellaceae</taxon>
        <taxon>Coxiella</taxon>
    </lineage>
</organism>
<keyword id="KW-0066">ATP synthesis</keyword>
<keyword id="KW-0997">Cell inner membrane</keyword>
<keyword id="KW-1003">Cell membrane</keyword>
<keyword id="KW-0138">CF(0)</keyword>
<keyword id="KW-0375">Hydrogen ion transport</keyword>
<keyword id="KW-0406">Ion transport</keyword>
<keyword id="KW-0472">Membrane</keyword>
<keyword id="KW-1185">Reference proteome</keyword>
<keyword id="KW-0812">Transmembrane</keyword>
<keyword id="KW-1133">Transmembrane helix</keyword>
<keyword id="KW-0813">Transport</keyword>
<feature type="chain" id="PRO_0000368442" description="ATP synthase subunit b">
    <location>
        <begin position="1"/>
        <end position="156"/>
    </location>
</feature>
<feature type="transmembrane region" description="Helical" evidence="1">
    <location>
        <begin position="7"/>
        <end position="27"/>
    </location>
</feature>
<proteinExistence type="inferred from homology"/>
<sequence length="156" mass="17410">MDINASLIVQMLVFVVFIGLTMKFIWPPLTKALEARRKNIADGLAAAEEGRKELELAEIKSKEQLTEAKTQAAHIIEQANQRANHIVEEAKNKAREEGAHLIQLAKNEIEQEYNAAKTELLKQISTIAVAGAQKILQREVDKASNDRLVDELVSEI</sequence>
<reference key="1">
    <citation type="journal article" date="2003" name="Proc. Natl. Acad. Sci. U.S.A.">
        <title>Complete genome sequence of the Q-fever pathogen, Coxiella burnetii.</title>
        <authorList>
            <person name="Seshadri R."/>
            <person name="Paulsen I.T."/>
            <person name="Eisen J.A."/>
            <person name="Read T.D."/>
            <person name="Nelson K.E."/>
            <person name="Nelson W.C."/>
            <person name="Ward N.L."/>
            <person name="Tettelin H."/>
            <person name="Davidsen T.M."/>
            <person name="Beanan M.J."/>
            <person name="DeBoy R.T."/>
            <person name="Daugherty S.C."/>
            <person name="Brinkac L.M."/>
            <person name="Madupu R."/>
            <person name="Dodson R.J."/>
            <person name="Khouri H.M."/>
            <person name="Lee K.H."/>
            <person name="Carty H.A."/>
            <person name="Scanlan D."/>
            <person name="Heinzen R.A."/>
            <person name="Thompson H.A."/>
            <person name="Samuel J.E."/>
            <person name="Fraser C.M."/>
            <person name="Heidelberg J.F."/>
        </authorList>
    </citation>
    <scope>NUCLEOTIDE SEQUENCE [LARGE SCALE GENOMIC DNA]</scope>
    <source>
        <strain>RSA 493 / Nine Mile phase I</strain>
    </source>
</reference>